<name>FBID_SPHTD</name>
<evidence type="ECO:0000255" key="1">
    <source>
        <dbReference type="HAMAP-Rule" id="MF_02114"/>
    </source>
</evidence>
<evidence type="ECO:0000305" key="2"/>
<organism>
    <name type="scientific">Sphaerobacter thermophilus (strain ATCC 49802 / DSM 20745 / KCCM 41009 / NCIMB 13125 / S 6022)</name>
    <dbReference type="NCBI Taxonomy" id="479434"/>
    <lineage>
        <taxon>Bacteria</taxon>
        <taxon>Pseudomonadati</taxon>
        <taxon>Thermomicrobiota</taxon>
        <taxon>Thermomicrobia</taxon>
        <taxon>Sphaerobacterales</taxon>
        <taxon>Sphaerobacterineae</taxon>
        <taxon>Sphaerobacteraceae</taxon>
        <taxon>Sphaerobacter</taxon>
    </lineage>
</organism>
<gene>
    <name evidence="1" type="primary">fbiD</name>
    <name type="ordered locus">Sthe_2612</name>
</gene>
<dbReference type="EC" id="2.7.7.105" evidence="1"/>
<dbReference type="EMBL" id="CP001824">
    <property type="protein sequence ID" value="ACZ40026.1"/>
    <property type="molecule type" value="Genomic_DNA"/>
</dbReference>
<dbReference type="RefSeq" id="WP_012873064.1">
    <property type="nucleotide sequence ID" value="NC_013524.1"/>
</dbReference>
<dbReference type="SMR" id="D1C883"/>
<dbReference type="STRING" id="479434.Sthe_2612"/>
<dbReference type="KEGG" id="sti:Sthe_2612"/>
<dbReference type="eggNOG" id="COG1920">
    <property type="taxonomic scope" value="Bacteria"/>
</dbReference>
<dbReference type="HOGENOM" id="CLU_076569_1_0_0"/>
<dbReference type="InParanoid" id="D1C883"/>
<dbReference type="OrthoDB" id="9151145at2"/>
<dbReference type="UniPathway" id="UPA00071"/>
<dbReference type="Proteomes" id="UP000002027">
    <property type="component" value="Chromosome 2"/>
</dbReference>
<dbReference type="GO" id="GO:0005525">
    <property type="term" value="F:GTP binding"/>
    <property type="evidence" value="ECO:0007669"/>
    <property type="project" value="UniProtKB-KW"/>
</dbReference>
<dbReference type="GO" id="GO:0043814">
    <property type="term" value="F:phospholactate guanylyltransferase activity"/>
    <property type="evidence" value="ECO:0007669"/>
    <property type="project" value="InterPro"/>
</dbReference>
<dbReference type="Gene3D" id="3.90.550.10">
    <property type="entry name" value="Spore Coat Polysaccharide Biosynthesis Protein SpsA, Chain A"/>
    <property type="match status" value="1"/>
</dbReference>
<dbReference type="HAMAP" id="MF_02114">
    <property type="entry name" value="CofC"/>
    <property type="match status" value="1"/>
</dbReference>
<dbReference type="InterPro" id="IPR002835">
    <property type="entry name" value="CofC"/>
</dbReference>
<dbReference type="InterPro" id="IPR029044">
    <property type="entry name" value="Nucleotide-diphossugar_trans"/>
</dbReference>
<dbReference type="NCBIfam" id="TIGR03552">
    <property type="entry name" value="F420_cofC"/>
    <property type="match status" value="1"/>
</dbReference>
<dbReference type="PANTHER" id="PTHR40392">
    <property type="entry name" value="2-PHOSPHO-L-LACTATE GUANYLYLTRANSFERASE"/>
    <property type="match status" value="1"/>
</dbReference>
<dbReference type="PANTHER" id="PTHR40392:SF1">
    <property type="entry name" value="2-PHOSPHO-L-LACTATE GUANYLYLTRANSFERASE"/>
    <property type="match status" value="1"/>
</dbReference>
<dbReference type="Pfam" id="PF01983">
    <property type="entry name" value="CofC"/>
    <property type="match status" value="1"/>
</dbReference>
<dbReference type="SUPFAM" id="SSF53448">
    <property type="entry name" value="Nucleotide-diphospho-sugar transferases"/>
    <property type="match status" value="1"/>
</dbReference>
<sequence>MTTIAVVPVQRLSTAKSRLAARLAPDERRTLVLSLLDHVLTALNAARQVDAVILVSPDPEVLEHAARRGAIALLQPGVGLNEGLRLGRDEALRRGADTLLIVLADLPWITADEIDALVAALPERGIALAPDRHDHGTNAAALRPPDAIEPAFGAGSFARHQAQARSRGLPLRELRVQGLAFDIDTPADLEELAGHAPVGASSDESGT</sequence>
<proteinExistence type="inferred from homology"/>
<feature type="chain" id="PRO_0000398714" description="Phosphoenolpyruvate guanylyltransferase">
    <location>
        <begin position="1"/>
        <end position="207"/>
    </location>
</feature>
<feature type="binding site" evidence="1">
    <location>
        <position position="137"/>
    </location>
    <ligand>
        <name>phosphoenolpyruvate</name>
        <dbReference type="ChEBI" id="CHEBI:58702"/>
    </ligand>
</feature>
<feature type="binding site" evidence="1">
    <location>
        <position position="153"/>
    </location>
    <ligand>
        <name>phosphoenolpyruvate</name>
        <dbReference type="ChEBI" id="CHEBI:58702"/>
    </ligand>
</feature>
<feature type="binding site" evidence="1">
    <location>
        <position position="156"/>
    </location>
    <ligand>
        <name>phosphoenolpyruvate</name>
        <dbReference type="ChEBI" id="CHEBI:58702"/>
    </ligand>
</feature>
<accession>D1C883</accession>
<keyword id="KW-0342">GTP-binding</keyword>
<keyword id="KW-0547">Nucleotide-binding</keyword>
<keyword id="KW-0548">Nucleotidyltransferase</keyword>
<keyword id="KW-1185">Reference proteome</keyword>
<keyword id="KW-0808">Transferase</keyword>
<protein>
    <recommendedName>
        <fullName evidence="1">Phosphoenolpyruvate guanylyltransferase</fullName>
        <shortName evidence="1">PEP guanylyltransferase</shortName>
        <ecNumber evidence="1">2.7.7.105</ecNumber>
    </recommendedName>
</protein>
<reference key="1">
    <citation type="submission" date="2009-11" db="EMBL/GenBank/DDBJ databases">
        <title>The complete chromosome 2 of Sphaerobacter thermophilus DSM 20745.</title>
        <authorList>
            <person name="Lucas S."/>
            <person name="Copeland A."/>
            <person name="Lapidus A."/>
            <person name="Glavina del Rio T."/>
            <person name="Dalin E."/>
            <person name="Tice H."/>
            <person name="Bruce D."/>
            <person name="Goodwin L."/>
            <person name="Pitluck S."/>
            <person name="Kyrpides N."/>
            <person name="Mavromatis K."/>
            <person name="Ivanova N."/>
            <person name="Mikhailova N."/>
            <person name="LaButti K.M."/>
            <person name="Clum A."/>
            <person name="Sun H.I."/>
            <person name="Brettin T."/>
            <person name="Detter J.C."/>
            <person name="Han C."/>
            <person name="Larimer F."/>
            <person name="Land M."/>
            <person name="Hauser L."/>
            <person name="Markowitz V."/>
            <person name="Cheng J.F."/>
            <person name="Hugenholtz P."/>
            <person name="Woyke T."/>
            <person name="Wu D."/>
            <person name="Steenblock K."/>
            <person name="Schneider S."/>
            <person name="Pukall R."/>
            <person name="Goeker M."/>
            <person name="Klenk H.P."/>
            <person name="Eisen J.A."/>
        </authorList>
    </citation>
    <scope>NUCLEOTIDE SEQUENCE [LARGE SCALE GENOMIC DNA]</scope>
    <source>
        <strain>ATCC 49802 / DSM 20745 / KCCM 41009 / NCIMB 13125 / S 6022</strain>
    </source>
</reference>
<comment type="function">
    <text evidence="1">Guanylyltransferase that catalyzes the activation of phosphoenolpyruvate (PEP) as enolpyruvoyl-2-diphospho-5'-guanosine, via the condensation of PEP with GTP. It is involved in the biosynthesis of coenzyme F420, a hydride carrier cofactor.</text>
</comment>
<comment type="catalytic activity">
    <reaction evidence="1">
        <text>phosphoenolpyruvate + GTP + H(+) = enolpyruvoyl-2-diphospho-5'-guanosine + diphosphate</text>
        <dbReference type="Rhea" id="RHEA:30519"/>
        <dbReference type="ChEBI" id="CHEBI:15378"/>
        <dbReference type="ChEBI" id="CHEBI:33019"/>
        <dbReference type="ChEBI" id="CHEBI:37565"/>
        <dbReference type="ChEBI" id="CHEBI:58702"/>
        <dbReference type="ChEBI" id="CHEBI:143701"/>
        <dbReference type="EC" id="2.7.7.105"/>
    </reaction>
</comment>
<comment type="pathway">
    <text evidence="1">Cofactor biosynthesis; coenzyme F420 biosynthesis.</text>
</comment>
<comment type="miscellaneous">
    <text evidence="2">The exact nature of the substrate is currently not known. This entry has been annotated based on its similarity to Actinobacteria.</text>
</comment>
<comment type="similarity">
    <text evidence="1">Belongs to the CofC family.</text>
</comment>